<proteinExistence type="evidence at protein level"/>
<keyword id="KW-1209">Archaeal flagellum biogenesis</keyword>
<keyword id="KW-1003">Cell membrane</keyword>
<keyword id="KW-0378">Hydrolase</keyword>
<keyword id="KW-0472">Membrane</keyword>
<keyword id="KW-0645">Protease</keyword>
<keyword id="KW-0812">Transmembrane</keyword>
<keyword id="KW-1133">Transmembrane helix</keyword>
<feature type="chain" id="PRO_0000419278" description="Preflagellin peptidase">
    <location>
        <begin position="1"/>
        <end position="233"/>
    </location>
</feature>
<feature type="topological domain" description="Cytoplasmic" evidence="1">
    <location>
        <position position="1"/>
    </location>
</feature>
<feature type="transmembrane region" description="Helical" evidence="1">
    <location>
        <begin position="2"/>
        <end position="18"/>
    </location>
</feature>
<feature type="topological domain" description="Extracellular" evidence="1">
    <location>
        <begin position="19"/>
        <end position="23"/>
    </location>
</feature>
<feature type="transmembrane region" description="Helical" evidence="1">
    <location>
        <begin position="24"/>
        <end position="46"/>
    </location>
</feature>
<feature type="topological domain" description="Cytoplasmic" evidence="1">
    <location>
        <begin position="47"/>
        <end position="49"/>
    </location>
</feature>
<feature type="transmembrane region" description="Helical" evidence="1">
    <location>
        <begin position="50"/>
        <end position="72"/>
    </location>
</feature>
<feature type="topological domain" description="Extracellular" evidence="1">
    <location>
        <begin position="73"/>
        <end position="78"/>
    </location>
</feature>
<feature type="transmembrane region" description="Helical" evidence="1">
    <location>
        <begin position="79"/>
        <end position="89"/>
    </location>
</feature>
<feature type="topological domain" description="Cytoplasmic" evidence="1">
    <location>
        <begin position="90"/>
        <end position="110"/>
    </location>
</feature>
<feature type="transmembrane region" description="Helical" evidence="1">
    <location>
        <begin position="111"/>
        <end position="139"/>
    </location>
</feature>
<feature type="topological domain" description="Extracellular" evidence="1">
    <location>
        <begin position="140"/>
        <end position="207"/>
    </location>
</feature>
<feature type="transmembrane region" description="Helical" evidence="1">
    <location>
        <begin position="208"/>
        <end position="219"/>
    </location>
</feature>
<feature type="topological domain" description="Cytoplasmic" evidence="1">
    <location>
        <begin position="220"/>
        <end position="233"/>
    </location>
</feature>
<feature type="site" description="Essential for catalysis">
    <location>
        <position position="18"/>
    </location>
</feature>
<feature type="site" description="Essential for catalysis">
    <location>
        <position position="79"/>
    </location>
</feature>
<feature type="mutagenesis site" description="Loss of preflagellin peptidase activity." evidence="3">
    <original>D</original>
    <variation>A</variation>
    <variation>N</variation>
    <location>
        <position position="18"/>
    </location>
</feature>
<feature type="mutagenesis site" description="Loss of preflagellin peptidase activity." evidence="3">
    <original>D</original>
    <variation>A</variation>
    <variation>N</variation>
    <location>
        <position position="79"/>
    </location>
</feature>
<feature type="mutagenesis site" description="Still able to process preflagellin to mature flagellin." evidence="3">
    <original>D</original>
    <variation>E</variation>
    <location>
        <position position="79"/>
    </location>
</feature>
<feature type="mutagenesis site" description="Still able to process preflagellin to mature flagellin." evidence="3">
    <original>D</original>
    <variation>A</variation>
    <location>
        <position position="186"/>
    </location>
</feature>
<feature type="mutagenesis site" description="Still able to process preflagellin to mature flagellin." evidence="3">
    <original>D</original>
    <variation>A</variation>
    <location>
        <position position="190"/>
    </location>
</feature>
<feature type="mutagenesis site" description="Still able to process preflagellin to mature flagellin." evidence="3">
    <original>D</original>
    <variation>A</variation>
    <location>
        <position position="224"/>
    </location>
</feature>
<protein>
    <recommendedName>
        <fullName>Preflagellin peptidase</fullName>
        <shortName>PFP</shortName>
        <ecNumber>3.4.23.52</ecNumber>
    </recommendedName>
</protein>
<comment type="function">
    <text evidence="2 3">Cleaves the N-terminal leader peptide from preflagellins. The processing of preflagellins is necessary for assembly of flagellins into a flagellum structure.</text>
</comment>
<comment type="catalytic activity">
    <reaction evidence="2 3">
        <text>Cleaves the signal peptide of 3 to 12 amino acids from the N-terminal of preflagellin, usually at Arg-Gly-|- or Lys-Gly-|-, to release flagellin.</text>
        <dbReference type="EC" id="3.4.23.52"/>
    </reaction>
</comment>
<comment type="biophysicochemical properties">
    <phDependence>
        <text evidence="2">Optimum pH is 8.5.</text>
    </phDependence>
    <temperatureDependence>
        <text evidence="2">Optimum temperature is 37 degrees Celsius.</text>
    </temperatureDependence>
</comment>
<comment type="subcellular location">
    <subcellularLocation>
        <location evidence="2">Cell membrane</location>
        <topology evidence="2">Multi-pass membrane protein</topology>
    </subcellularLocation>
</comment>
<comment type="disruption phenotype">
    <text evidence="3">Cells lacking this gene are non-motile and non-flagellated. The flagellins of the mutant have larger molecular weights than their wild-type counterparts, as expected if they retain their 11- to 12-amino-acid leader peptide.</text>
</comment>
<comment type="similarity">
    <text evidence="4">Belongs to the peptidase A24 family. Archaeal preflagellin peptidase subfamily.</text>
</comment>
<evidence type="ECO:0000250" key="1"/>
<evidence type="ECO:0000269" key="2">
    <source>
    </source>
</evidence>
<evidence type="ECO:0000269" key="3">
    <source>
    </source>
</evidence>
<evidence type="ECO:0000305" key="4"/>
<dbReference type="EC" id="3.4.23.52"/>
<dbReference type="EMBL" id="AF508194">
    <property type="protein sequence ID" value="AAM34242.1"/>
    <property type="molecule type" value="Genomic_DNA"/>
</dbReference>
<dbReference type="SMR" id="Q8NKW5"/>
<dbReference type="MEROPS" id="A24.016"/>
<dbReference type="BioCyc" id="MetaCyc:MONOMER-16809"/>
<dbReference type="BRENDA" id="3.4.23.52">
    <property type="organism ID" value="3268"/>
</dbReference>
<dbReference type="GO" id="GO:0005886">
    <property type="term" value="C:plasma membrane"/>
    <property type="evidence" value="ECO:0007669"/>
    <property type="project" value="UniProtKB-SubCell"/>
</dbReference>
<dbReference type="GO" id="GO:0004190">
    <property type="term" value="F:aspartic-type endopeptidase activity"/>
    <property type="evidence" value="ECO:0007669"/>
    <property type="project" value="InterPro"/>
</dbReference>
<dbReference type="GO" id="GO:0006508">
    <property type="term" value="P:proteolysis"/>
    <property type="evidence" value="ECO:0007669"/>
    <property type="project" value="UniProtKB-KW"/>
</dbReference>
<dbReference type="Gene3D" id="1.20.120.1220">
    <property type="match status" value="1"/>
</dbReference>
<dbReference type="Gene3D" id="6.10.250.3240">
    <property type="match status" value="1"/>
</dbReference>
<dbReference type="InterPro" id="IPR054964">
    <property type="entry name" value="Arch_preflagellin_pept"/>
</dbReference>
<dbReference type="InterPro" id="IPR052218">
    <property type="entry name" value="Preflagellin_Peptidase"/>
</dbReference>
<dbReference type="InterPro" id="IPR000045">
    <property type="entry name" value="Prepilin_IV_endopep_pep"/>
</dbReference>
<dbReference type="NCBIfam" id="NF040695">
    <property type="entry name" value="FlaK_Arch"/>
    <property type="match status" value="1"/>
</dbReference>
<dbReference type="PANTHER" id="PTHR36506">
    <property type="entry name" value="PREFLAGELLIN PEPTIDASE"/>
    <property type="match status" value="1"/>
</dbReference>
<dbReference type="PANTHER" id="PTHR36506:SF1">
    <property type="entry name" value="PREFLAGELLIN PEPTIDASE"/>
    <property type="match status" value="1"/>
</dbReference>
<dbReference type="Pfam" id="PF01478">
    <property type="entry name" value="Peptidase_A24"/>
    <property type="match status" value="1"/>
</dbReference>
<accession>Q8NKW5</accession>
<reference key="1">
    <citation type="submission" date="2002-04" db="EMBL/GenBank/DDBJ databases">
        <authorList>
            <person name="Feldman R."/>
            <person name="Overbeek R."/>
            <person name="Whitman W.B."/>
        </authorList>
    </citation>
    <scope>NUCLEOTIDE SEQUENCE [GENOMIC DNA]</scope>
    <source>
        <strain>ATCC 33273 / DSM 1537 / NBRC 100457 / OCM 70 / PS</strain>
    </source>
</reference>
<reference key="2">
    <citation type="journal article" date="2000" name="J. Bacteriol.">
        <title>Posttranslational processing of Methanococcus voltae preflagellin by preflagellin peptidases of M. voltae and other methanogens.</title>
        <authorList>
            <person name="Correia J.D."/>
            <person name="Jarrell K.F."/>
        </authorList>
    </citation>
    <scope>FUNCTION</scope>
    <scope>CATALYTIC ACTIVITY</scope>
    <scope>BIOPHYSICOCHEMICAL PROPERTIES</scope>
    <scope>SUBCELLULAR LOCATION</scope>
</reference>
<reference key="3">
    <citation type="journal article" date="2003" name="Mol. Microbiol.">
        <title>Cleavage of preflagellins by an aspartic acid signal peptidase is essential for flagellation in the archaeon Methanococcus voltae.</title>
        <authorList>
            <person name="Bardy S.L."/>
            <person name="Jarrell K.F."/>
        </authorList>
    </citation>
    <scope>FUNCTION</scope>
    <scope>CATALYTIC ACTIVITY</scope>
    <scope>DISRUPTION PHENOTYPE</scope>
    <scope>TOPOLOGY</scope>
    <scope>MUTAGENESIS OF ASP-18; ASP-79; ASP-186; ASP-190 AND ASP-224</scope>
</reference>
<gene>
    <name type="primary">flaK</name>
</gene>
<name>FLAK_METVO</name>
<organism>
    <name type="scientific">Methanococcus voltae</name>
    <dbReference type="NCBI Taxonomy" id="2188"/>
    <lineage>
        <taxon>Archaea</taxon>
        <taxon>Methanobacteriati</taxon>
        <taxon>Methanobacteriota</taxon>
        <taxon>Methanomada group</taxon>
        <taxon>Methanococci</taxon>
        <taxon>Methanococcales</taxon>
        <taxon>Methanococcaceae</taxon>
        <taxon>Methanococcus</taxon>
    </lineage>
</organism>
<sequence length="233" mass="25888">MIAYAIGLLGLLIASIQDIKSREIENYIWIGMAVIGLLLSTYLSFTTGNFMPIISSISGFIICFIIGYLMFVLGIGGADGKILMGMGALIPSYAFPVYSSLQPLYTMEYIPWFPLLVFFNGVILMIVLPIYLFFKNLSNGVKPKKLKEYVLMLVGEYITVAEAKKGNKVVLGKGKDVKLIPSVNDDKNYDLSKYKDTQYVWATPELPLLVPIALSYIITPFLGDKILSIILPM</sequence>